<accession>Q6D8K0</accession>
<feature type="signal peptide" evidence="1">
    <location>
        <begin position="1"/>
        <end position="16"/>
    </location>
</feature>
<feature type="chain" id="PRO_0000032788" description="Membrane-bound lytic murein transglycosylase C">
    <location>
        <begin position="17"/>
        <end position="357"/>
    </location>
</feature>
<feature type="lipid moiety-binding region" description="N-palmitoyl cysteine" evidence="1">
    <location>
        <position position="17"/>
    </location>
</feature>
<feature type="lipid moiety-binding region" description="S-diacylglycerol cysteine" evidence="1">
    <location>
        <position position="17"/>
    </location>
</feature>
<protein>
    <recommendedName>
        <fullName evidence="1">Membrane-bound lytic murein transglycosylase C</fullName>
        <ecNumber evidence="1">4.2.2.n1</ecNumber>
    </recommendedName>
    <alternativeName>
        <fullName evidence="1">Murein lyase C</fullName>
    </alternativeName>
</protein>
<comment type="function">
    <text evidence="1">Murein-degrading enzyme. May play a role in recycling of muropeptides during cell elongation and/or cell division.</text>
</comment>
<comment type="catalytic activity">
    <reaction evidence="1">
        <text>Exolytic cleavage of the (1-&gt;4)-beta-glycosidic linkage between N-acetylmuramic acid (MurNAc) and N-acetylglucosamine (GlcNAc) residues in peptidoglycan, from either the reducing or the non-reducing ends of the peptidoglycan chains, with concomitant formation of a 1,6-anhydrobond in the MurNAc residue.</text>
        <dbReference type="EC" id="4.2.2.n1"/>
    </reaction>
</comment>
<comment type="subcellular location">
    <subcellularLocation>
        <location evidence="1">Cell outer membrane</location>
        <topology evidence="1">Lipid-anchor</topology>
    </subcellularLocation>
</comment>
<comment type="similarity">
    <text evidence="1">Belongs to the transglycosylase Slt family.</text>
</comment>
<organism>
    <name type="scientific">Pectobacterium atrosepticum (strain SCRI 1043 / ATCC BAA-672)</name>
    <name type="common">Erwinia carotovora subsp. atroseptica</name>
    <dbReference type="NCBI Taxonomy" id="218491"/>
    <lineage>
        <taxon>Bacteria</taxon>
        <taxon>Pseudomonadati</taxon>
        <taxon>Pseudomonadota</taxon>
        <taxon>Gammaproteobacteria</taxon>
        <taxon>Enterobacterales</taxon>
        <taxon>Pectobacteriaceae</taxon>
        <taxon>Pectobacterium</taxon>
    </lineage>
</organism>
<sequence length="357" mass="39773">MKKMLALLVIAPLLVSCSGNKGNTDNEEFLKDTNAFDILMGQFANNIENIWGINEVLIAGPKDYVKYTDQYQTRSHINFDAGSITIETLSATNSVASLRQAIITTLLMGDDASNTDLYSDANDIQISREPLLYGQVLDNTGQAIRWEGRAASFADYLLQKRLQKRTSGLHVIWSVTIQLVPNHLDKRAHKYLPLVRKASERYGIEESLILAIMQTESSFNPYAVSRSDALGLMQVVQHSAGRDVFKMKGKWGQPSRSYLFDPEQNIDAGTAYLSILKNSYLAGIENPTSKRYAVITAYNGGAGSVLRVFSSDRDRAVGIINNMSPGDVYQTLTTKHPSGESRRYLNKVNSAQKNYRR</sequence>
<dbReference type="EC" id="4.2.2.n1" evidence="1"/>
<dbReference type="EMBL" id="BX950851">
    <property type="protein sequence ID" value="CAG73885.1"/>
    <property type="molecule type" value="Genomic_DNA"/>
</dbReference>
<dbReference type="RefSeq" id="WP_011092574.1">
    <property type="nucleotide sequence ID" value="NC_004547.2"/>
</dbReference>
<dbReference type="SMR" id="Q6D8K0"/>
<dbReference type="STRING" id="218491.ECA0974"/>
<dbReference type="CAZy" id="GH23">
    <property type="family name" value="Glycoside Hydrolase Family 23"/>
</dbReference>
<dbReference type="KEGG" id="eca:ECA0974"/>
<dbReference type="PATRIC" id="fig|218491.5.peg.980"/>
<dbReference type="eggNOG" id="COG0741">
    <property type="taxonomic scope" value="Bacteria"/>
</dbReference>
<dbReference type="HOGENOM" id="CLU_044583_0_0_6"/>
<dbReference type="OrthoDB" id="5620293at2"/>
<dbReference type="Proteomes" id="UP000007966">
    <property type="component" value="Chromosome"/>
</dbReference>
<dbReference type="GO" id="GO:0009279">
    <property type="term" value="C:cell outer membrane"/>
    <property type="evidence" value="ECO:0007669"/>
    <property type="project" value="UniProtKB-SubCell"/>
</dbReference>
<dbReference type="GO" id="GO:0016798">
    <property type="term" value="F:hydrolase activity, acting on glycosyl bonds"/>
    <property type="evidence" value="ECO:0007669"/>
    <property type="project" value="InterPro"/>
</dbReference>
<dbReference type="GO" id="GO:0008933">
    <property type="term" value="F:peptidoglycan lytic transglycosylase activity"/>
    <property type="evidence" value="ECO:0007669"/>
    <property type="project" value="UniProtKB-UniRule"/>
</dbReference>
<dbReference type="GO" id="GO:0016998">
    <property type="term" value="P:cell wall macromolecule catabolic process"/>
    <property type="evidence" value="ECO:0007669"/>
    <property type="project" value="UniProtKB-UniRule"/>
</dbReference>
<dbReference type="GO" id="GO:0071555">
    <property type="term" value="P:cell wall organization"/>
    <property type="evidence" value="ECO:0007669"/>
    <property type="project" value="UniProtKB-KW"/>
</dbReference>
<dbReference type="GO" id="GO:0000270">
    <property type="term" value="P:peptidoglycan metabolic process"/>
    <property type="evidence" value="ECO:0007669"/>
    <property type="project" value="InterPro"/>
</dbReference>
<dbReference type="CDD" id="cd16893">
    <property type="entry name" value="LT_MltC_MltE"/>
    <property type="match status" value="1"/>
</dbReference>
<dbReference type="FunFam" id="1.10.530.10:FF:000002">
    <property type="entry name" value="Membrane-bound lytic murein transglycosylase C"/>
    <property type="match status" value="1"/>
</dbReference>
<dbReference type="Gene3D" id="1.10.530.10">
    <property type="match status" value="1"/>
</dbReference>
<dbReference type="HAMAP" id="MF_01616">
    <property type="entry name" value="MltC"/>
    <property type="match status" value="1"/>
</dbReference>
<dbReference type="InterPro" id="IPR023346">
    <property type="entry name" value="Lysozyme-like_dom_sf"/>
</dbReference>
<dbReference type="InterPro" id="IPR023664">
    <property type="entry name" value="Murein_transglycosylaseC"/>
</dbReference>
<dbReference type="InterPro" id="IPR024570">
    <property type="entry name" value="Murein_transglycosylaseC_N"/>
</dbReference>
<dbReference type="InterPro" id="IPR000189">
    <property type="entry name" value="Transglyc_AS"/>
</dbReference>
<dbReference type="InterPro" id="IPR008258">
    <property type="entry name" value="Transglycosylase_SLT_dom_1"/>
</dbReference>
<dbReference type="NCBIfam" id="NF008670">
    <property type="entry name" value="PRK11671.1"/>
    <property type="match status" value="1"/>
</dbReference>
<dbReference type="PANTHER" id="PTHR37423:SF2">
    <property type="entry name" value="MEMBRANE-BOUND LYTIC MUREIN TRANSGLYCOSYLASE C"/>
    <property type="match status" value="1"/>
</dbReference>
<dbReference type="PANTHER" id="PTHR37423">
    <property type="entry name" value="SOLUBLE LYTIC MUREIN TRANSGLYCOSYLASE-RELATED"/>
    <property type="match status" value="1"/>
</dbReference>
<dbReference type="Pfam" id="PF11873">
    <property type="entry name" value="Mltc_N"/>
    <property type="match status" value="1"/>
</dbReference>
<dbReference type="Pfam" id="PF01464">
    <property type="entry name" value="SLT"/>
    <property type="match status" value="1"/>
</dbReference>
<dbReference type="SUPFAM" id="SSF53955">
    <property type="entry name" value="Lysozyme-like"/>
    <property type="match status" value="1"/>
</dbReference>
<dbReference type="PROSITE" id="PS51257">
    <property type="entry name" value="PROKAR_LIPOPROTEIN"/>
    <property type="match status" value="1"/>
</dbReference>
<dbReference type="PROSITE" id="PS00922">
    <property type="entry name" value="TRANSGLYCOSYLASE"/>
    <property type="match status" value="1"/>
</dbReference>
<evidence type="ECO:0000255" key="1">
    <source>
        <dbReference type="HAMAP-Rule" id="MF_01616"/>
    </source>
</evidence>
<name>MLTC_PECAS</name>
<gene>
    <name evidence="1" type="primary">mltC</name>
    <name type="ordered locus">ECA0974</name>
</gene>
<proteinExistence type="inferred from homology"/>
<keyword id="KW-0998">Cell outer membrane</keyword>
<keyword id="KW-0961">Cell wall biogenesis/degradation</keyword>
<keyword id="KW-0449">Lipoprotein</keyword>
<keyword id="KW-0456">Lyase</keyword>
<keyword id="KW-0472">Membrane</keyword>
<keyword id="KW-0564">Palmitate</keyword>
<keyword id="KW-1185">Reference proteome</keyword>
<keyword id="KW-0732">Signal</keyword>
<reference key="1">
    <citation type="journal article" date="2004" name="Proc. Natl. Acad. Sci. U.S.A.">
        <title>Genome sequence of the enterobacterial phytopathogen Erwinia carotovora subsp. atroseptica and characterization of virulence factors.</title>
        <authorList>
            <person name="Bell K.S."/>
            <person name="Sebaihia M."/>
            <person name="Pritchard L."/>
            <person name="Holden M.T.G."/>
            <person name="Hyman L.J."/>
            <person name="Holeva M.C."/>
            <person name="Thomson N.R."/>
            <person name="Bentley S.D."/>
            <person name="Churcher L.J.C."/>
            <person name="Mungall K."/>
            <person name="Atkin R."/>
            <person name="Bason N."/>
            <person name="Brooks K."/>
            <person name="Chillingworth T."/>
            <person name="Clark K."/>
            <person name="Doggett J."/>
            <person name="Fraser A."/>
            <person name="Hance Z."/>
            <person name="Hauser H."/>
            <person name="Jagels K."/>
            <person name="Moule S."/>
            <person name="Norbertczak H."/>
            <person name="Ormond D."/>
            <person name="Price C."/>
            <person name="Quail M.A."/>
            <person name="Sanders M."/>
            <person name="Walker D."/>
            <person name="Whitehead S."/>
            <person name="Salmond G.P.C."/>
            <person name="Birch P.R.J."/>
            <person name="Parkhill J."/>
            <person name="Toth I.K."/>
        </authorList>
    </citation>
    <scope>NUCLEOTIDE SEQUENCE [LARGE SCALE GENOMIC DNA]</scope>
    <source>
        <strain>SCRI 1043 / ATCC BAA-672</strain>
    </source>
</reference>